<comment type="subunit">
    <text evidence="1">Part of the 50S ribosomal subunit. Contacts protein L32.</text>
</comment>
<comment type="similarity">
    <text evidence="1">Belongs to the bacterial ribosomal protein bL17 family.</text>
</comment>
<gene>
    <name evidence="1" type="primary">rplQ</name>
    <name type="ordered locus">SPAB_04254</name>
</gene>
<protein>
    <recommendedName>
        <fullName evidence="1">Large ribosomal subunit protein bL17</fullName>
    </recommendedName>
    <alternativeName>
        <fullName evidence="2">50S ribosomal protein L17</fullName>
    </alternativeName>
</protein>
<proteinExistence type="inferred from homology"/>
<sequence length="127" mass="14395">MRHRKSGRQLNRNSSHRQAMFRNMAGSLVRHEIIKTTLPKAKELRRVVEPLITLAKTDSVANRRLAFARTRDNEIVAKLFNELGPRFASRAGGYTRILKCGFRAGDNAPMAYIELVDRSEKTEAAAE</sequence>
<reference key="1">
    <citation type="submission" date="2007-11" db="EMBL/GenBank/DDBJ databases">
        <authorList>
            <consortium name="The Salmonella enterica serovar Paratyphi B Genome Sequencing Project"/>
            <person name="McClelland M."/>
            <person name="Sanderson E.K."/>
            <person name="Porwollik S."/>
            <person name="Spieth J."/>
            <person name="Clifton W.S."/>
            <person name="Fulton R."/>
            <person name="Cordes M."/>
            <person name="Wollam A."/>
            <person name="Shah N."/>
            <person name="Pepin K."/>
            <person name="Bhonagiri V."/>
            <person name="Nash W."/>
            <person name="Johnson M."/>
            <person name="Thiruvilangam P."/>
            <person name="Wilson R."/>
        </authorList>
    </citation>
    <scope>NUCLEOTIDE SEQUENCE [LARGE SCALE GENOMIC DNA]</scope>
    <source>
        <strain>ATCC BAA-1250 / SPB7</strain>
    </source>
</reference>
<name>RL17_SALPB</name>
<organism>
    <name type="scientific">Salmonella paratyphi B (strain ATCC BAA-1250 / SPB7)</name>
    <dbReference type="NCBI Taxonomy" id="1016998"/>
    <lineage>
        <taxon>Bacteria</taxon>
        <taxon>Pseudomonadati</taxon>
        <taxon>Pseudomonadota</taxon>
        <taxon>Gammaproteobacteria</taxon>
        <taxon>Enterobacterales</taxon>
        <taxon>Enterobacteriaceae</taxon>
        <taxon>Salmonella</taxon>
    </lineage>
</organism>
<feature type="chain" id="PRO_1000087190" description="Large ribosomal subunit protein bL17">
    <location>
        <begin position="1"/>
        <end position="127"/>
    </location>
</feature>
<accession>A9N8B8</accession>
<keyword id="KW-0687">Ribonucleoprotein</keyword>
<keyword id="KW-0689">Ribosomal protein</keyword>
<dbReference type="EMBL" id="CP000886">
    <property type="protein sequence ID" value="ABX69571.1"/>
    <property type="molecule type" value="Genomic_DNA"/>
</dbReference>
<dbReference type="RefSeq" id="WP_001216370.1">
    <property type="nucleotide sequence ID" value="NC_010102.1"/>
</dbReference>
<dbReference type="SMR" id="A9N8B8"/>
<dbReference type="GeneID" id="89546962"/>
<dbReference type="KEGG" id="spq:SPAB_04254"/>
<dbReference type="PATRIC" id="fig|1016998.12.peg.4001"/>
<dbReference type="HOGENOM" id="CLU_074407_2_0_6"/>
<dbReference type="BioCyc" id="SENT1016998:SPAB_RS17305-MONOMER"/>
<dbReference type="Proteomes" id="UP000008556">
    <property type="component" value="Chromosome"/>
</dbReference>
<dbReference type="GO" id="GO:0022625">
    <property type="term" value="C:cytosolic large ribosomal subunit"/>
    <property type="evidence" value="ECO:0007669"/>
    <property type="project" value="TreeGrafter"/>
</dbReference>
<dbReference type="GO" id="GO:0003735">
    <property type="term" value="F:structural constituent of ribosome"/>
    <property type="evidence" value="ECO:0007669"/>
    <property type="project" value="InterPro"/>
</dbReference>
<dbReference type="GO" id="GO:0006412">
    <property type="term" value="P:translation"/>
    <property type="evidence" value="ECO:0007669"/>
    <property type="project" value="UniProtKB-UniRule"/>
</dbReference>
<dbReference type="FunFam" id="3.90.1030.10:FF:000001">
    <property type="entry name" value="50S ribosomal protein L17"/>
    <property type="match status" value="1"/>
</dbReference>
<dbReference type="Gene3D" id="3.90.1030.10">
    <property type="entry name" value="Ribosomal protein L17"/>
    <property type="match status" value="1"/>
</dbReference>
<dbReference type="HAMAP" id="MF_01368">
    <property type="entry name" value="Ribosomal_bL17"/>
    <property type="match status" value="1"/>
</dbReference>
<dbReference type="InterPro" id="IPR000456">
    <property type="entry name" value="Ribosomal_bL17"/>
</dbReference>
<dbReference type="InterPro" id="IPR047859">
    <property type="entry name" value="Ribosomal_bL17_CS"/>
</dbReference>
<dbReference type="InterPro" id="IPR036373">
    <property type="entry name" value="Ribosomal_bL17_sf"/>
</dbReference>
<dbReference type="NCBIfam" id="TIGR00059">
    <property type="entry name" value="L17"/>
    <property type="match status" value="1"/>
</dbReference>
<dbReference type="PANTHER" id="PTHR14413:SF16">
    <property type="entry name" value="LARGE RIBOSOMAL SUBUNIT PROTEIN BL17M"/>
    <property type="match status" value="1"/>
</dbReference>
<dbReference type="PANTHER" id="PTHR14413">
    <property type="entry name" value="RIBOSOMAL PROTEIN L17"/>
    <property type="match status" value="1"/>
</dbReference>
<dbReference type="Pfam" id="PF01196">
    <property type="entry name" value="Ribosomal_L17"/>
    <property type="match status" value="1"/>
</dbReference>
<dbReference type="SUPFAM" id="SSF64263">
    <property type="entry name" value="Prokaryotic ribosomal protein L17"/>
    <property type="match status" value="1"/>
</dbReference>
<dbReference type="PROSITE" id="PS01167">
    <property type="entry name" value="RIBOSOMAL_L17"/>
    <property type="match status" value="1"/>
</dbReference>
<evidence type="ECO:0000255" key="1">
    <source>
        <dbReference type="HAMAP-Rule" id="MF_01368"/>
    </source>
</evidence>
<evidence type="ECO:0000305" key="2"/>